<dbReference type="EMBL" id="CP000423">
    <property type="protein sequence ID" value="ABJ71198.1"/>
    <property type="molecule type" value="Genomic_DNA"/>
</dbReference>
<dbReference type="RefSeq" id="WP_003567483.1">
    <property type="nucleotide sequence ID" value="NC_008526.1"/>
</dbReference>
<dbReference type="RefSeq" id="YP_807640.1">
    <property type="nucleotide sequence ID" value="NC_008526.1"/>
</dbReference>
<dbReference type="SMR" id="Q035C4"/>
<dbReference type="STRING" id="321967.LSEI_2462"/>
<dbReference type="PaxDb" id="321967-LSEI_2462"/>
<dbReference type="GeneID" id="69832834"/>
<dbReference type="KEGG" id="lca:LSEI_2462"/>
<dbReference type="PATRIC" id="fig|321967.11.peg.2416"/>
<dbReference type="HOGENOM" id="CLU_046483_2_1_9"/>
<dbReference type="PRO" id="PR:Q035C4"/>
<dbReference type="Proteomes" id="UP000001651">
    <property type="component" value="Chromosome"/>
</dbReference>
<dbReference type="GO" id="GO:0022627">
    <property type="term" value="C:cytosolic small ribosomal subunit"/>
    <property type="evidence" value="ECO:0007669"/>
    <property type="project" value="TreeGrafter"/>
</dbReference>
<dbReference type="GO" id="GO:0003723">
    <property type="term" value="F:RNA binding"/>
    <property type="evidence" value="ECO:0007669"/>
    <property type="project" value="TreeGrafter"/>
</dbReference>
<dbReference type="GO" id="GO:0003735">
    <property type="term" value="F:structural constituent of ribosome"/>
    <property type="evidence" value="ECO:0007669"/>
    <property type="project" value="InterPro"/>
</dbReference>
<dbReference type="GO" id="GO:0006412">
    <property type="term" value="P:translation"/>
    <property type="evidence" value="ECO:0007669"/>
    <property type="project" value="UniProtKB-UniRule"/>
</dbReference>
<dbReference type="FunFam" id="3.30.230.10:FF:000001">
    <property type="entry name" value="30S ribosomal protein S9"/>
    <property type="match status" value="1"/>
</dbReference>
<dbReference type="Gene3D" id="3.30.230.10">
    <property type="match status" value="1"/>
</dbReference>
<dbReference type="HAMAP" id="MF_00532_B">
    <property type="entry name" value="Ribosomal_uS9_B"/>
    <property type="match status" value="1"/>
</dbReference>
<dbReference type="InterPro" id="IPR020568">
    <property type="entry name" value="Ribosomal_Su5_D2-typ_SF"/>
</dbReference>
<dbReference type="InterPro" id="IPR000754">
    <property type="entry name" value="Ribosomal_uS9"/>
</dbReference>
<dbReference type="InterPro" id="IPR023035">
    <property type="entry name" value="Ribosomal_uS9_bac/plastid"/>
</dbReference>
<dbReference type="InterPro" id="IPR020574">
    <property type="entry name" value="Ribosomal_uS9_CS"/>
</dbReference>
<dbReference type="InterPro" id="IPR014721">
    <property type="entry name" value="Ribsml_uS5_D2-typ_fold_subgr"/>
</dbReference>
<dbReference type="NCBIfam" id="NF001099">
    <property type="entry name" value="PRK00132.1"/>
    <property type="match status" value="1"/>
</dbReference>
<dbReference type="PANTHER" id="PTHR21569">
    <property type="entry name" value="RIBOSOMAL PROTEIN S9"/>
    <property type="match status" value="1"/>
</dbReference>
<dbReference type="PANTHER" id="PTHR21569:SF1">
    <property type="entry name" value="SMALL RIBOSOMAL SUBUNIT PROTEIN US9M"/>
    <property type="match status" value="1"/>
</dbReference>
<dbReference type="Pfam" id="PF00380">
    <property type="entry name" value="Ribosomal_S9"/>
    <property type="match status" value="1"/>
</dbReference>
<dbReference type="SUPFAM" id="SSF54211">
    <property type="entry name" value="Ribosomal protein S5 domain 2-like"/>
    <property type="match status" value="1"/>
</dbReference>
<dbReference type="PROSITE" id="PS00360">
    <property type="entry name" value="RIBOSOMAL_S9"/>
    <property type="match status" value="1"/>
</dbReference>
<feature type="chain" id="PRO_1000051240" description="Small ribosomal subunit protein uS9">
    <location>
        <begin position="1"/>
        <end position="130"/>
    </location>
</feature>
<feature type="region of interest" description="Disordered" evidence="2">
    <location>
        <begin position="98"/>
        <end position="130"/>
    </location>
</feature>
<feature type="compositionally biased region" description="Basic residues" evidence="2">
    <location>
        <begin position="111"/>
        <end position="130"/>
    </location>
</feature>
<evidence type="ECO:0000255" key="1">
    <source>
        <dbReference type="HAMAP-Rule" id="MF_00532"/>
    </source>
</evidence>
<evidence type="ECO:0000256" key="2">
    <source>
        <dbReference type="SAM" id="MobiDB-lite"/>
    </source>
</evidence>
<evidence type="ECO:0000305" key="3"/>
<comment type="similarity">
    <text evidence="1">Belongs to the universal ribosomal protein uS9 family.</text>
</comment>
<gene>
    <name evidence="1" type="primary">rpsI</name>
    <name type="ordered locus">LSEI_2462</name>
</gene>
<reference key="1">
    <citation type="journal article" date="2006" name="Proc. Natl. Acad. Sci. U.S.A.">
        <title>Comparative genomics of the lactic acid bacteria.</title>
        <authorList>
            <person name="Makarova K.S."/>
            <person name="Slesarev A."/>
            <person name="Wolf Y.I."/>
            <person name="Sorokin A."/>
            <person name="Mirkin B."/>
            <person name="Koonin E.V."/>
            <person name="Pavlov A."/>
            <person name="Pavlova N."/>
            <person name="Karamychev V."/>
            <person name="Polouchine N."/>
            <person name="Shakhova V."/>
            <person name="Grigoriev I."/>
            <person name="Lou Y."/>
            <person name="Rohksar D."/>
            <person name="Lucas S."/>
            <person name="Huang K."/>
            <person name="Goodstein D.M."/>
            <person name="Hawkins T."/>
            <person name="Plengvidhya V."/>
            <person name="Welker D."/>
            <person name="Hughes J."/>
            <person name="Goh Y."/>
            <person name="Benson A."/>
            <person name="Baldwin K."/>
            <person name="Lee J.-H."/>
            <person name="Diaz-Muniz I."/>
            <person name="Dosti B."/>
            <person name="Smeianov V."/>
            <person name="Wechter W."/>
            <person name="Barabote R."/>
            <person name="Lorca G."/>
            <person name="Altermann E."/>
            <person name="Barrangou R."/>
            <person name="Ganesan B."/>
            <person name="Xie Y."/>
            <person name="Rawsthorne H."/>
            <person name="Tamir D."/>
            <person name="Parker C."/>
            <person name="Breidt F."/>
            <person name="Broadbent J.R."/>
            <person name="Hutkins R."/>
            <person name="O'Sullivan D."/>
            <person name="Steele J."/>
            <person name="Unlu G."/>
            <person name="Saier M.H. Jr."/>
            <person name="Klaenhammer T."/>
            <person name="Richardson P."/>
            <person name="Kozyavkin S."/>
            <person name="Weimer B.C."/>
            <person name="Mills D.A."/>
        </authorList>
    </citation>
    <scope>NUCLEOTIDE SEQUENCE [LARGE SCALE GENOMIC DNA]</scope>
    <source>
        <strain>ATCC 334 / BCRC 17002 / CCUG 31169 / CIP 107868 / KCTC 3260 / NRRL B-441</strain>
    </source>
</reference>
<organism>
    <name type="scientific">Lacticaseibacillus paracasei (strain ATCC 334 / BCRC 17002 / CCUG 31169 / CIP 107868 / KCTC 3260 / NRRL B-441)</name>
    <name type="common">Lactobacillus paracasei</name>
    <dbReference type="NCBI Taxonomy" id="321967"/>
    <lineage>
        <taxon>Bacteria</taxon>
        <taxon>Bacillati</taxon>
        <taxon>Bacillota</taxon>
        <taxon>Bacilli</taxon>
        <taxon>Lactobacillales</taxon>
        <taxon>Lactobacillaceae</taxon>
        <taxon>Lacticaseibacillus</taxon>
    </lineage>
</organism>
<accession>Q035C4</accession>
<name>RS9_LACP3</name>
<sequence length="130" mass="14273">MAQVQYAGTGRRKNSVARVRLVPGTGKITMNGKDVRDYLPYENLITDLSQPFGITETTGSYDVLVNVNGGGFSGQAGATRHGIARALLTVDPDFRGPLKKAGMLTRDPRMKERKKYGLKKARKASQFSKR</sequence>
<keyword id="KW-1185">Reference proteome</keyword>
<keyword id="KW-0687">Ribonucleoprotein</keyword>
<keyword id="KW-0689">Ribosomal protein</keyword>
<protein>
    <recommendedName>
        <fullName evidence="1">Small ribosomal subunit protein uS9</fullName>
    </recommendedName>
    <alternativeName>
        <fullName evidence="3">30S ribosomal protein S9</fullName>
    </alternativeName>
</protein>
<proteinExistence type="inferred from homology"/>